<organism>
    <name type="scientific">Christiangramia forsetii (strain DSM 17595 / CGMCC 1.15422 / KT0803)</name>
    <name type="common">Gramella forsetii</name>
    <dbReference type="NCBI Taxonomy" id="411154"/>
    <lineage>
        <taxon>Bacteria</taxon>
        <taxon>Pseudomonadati</taxon>
        <taxon>Bacteroidota</taxon>
        <taxon>Flavobacteriia</taxon>
        <taxon>Flavobacteriales</taxon>
        <taxon>Flavobacteriaceae</taxon>
        <taxon>Christiangramia</taxon>
    </lineage>
</organism>
<dbReference type="EMBL" id="CU207366">
    <property type="protein sequence ID" value="CAL68042.1"/>
    <property type="molecule type" value="Genomic_DNA"/>
</dbReference>
<dbReference type="RefSeq" id="WP_011710943.1">
    <property type="nucleotide sequence ID" value="NC_008571.1"/>
</dbReference>
<dbReference type="SMR" id="A0M5Z7"/>
<dbReference type="STRING" id="411154.GFO_3098"/>
<dbReference type="KEGG" id="gfo:GFO_3098"/>
<dbReference type="eggNOG" id="COG0792">
    <property type="taxonomic scope" value="Bacteria"/>
</dbReference>
<dbReference type="HOGENOM" id="CLU_115353_2_1_10"/>
<dbReference type="OrthoDB" id="9802516at2"/>
<dbReference type="Proteomes" id="UP000000755">
    <property type="component" value="Chromosome"/>
</dbReference>
<dbReference type="GO" id="GO:0003676">
    <property type="term" value="F:nucleic acid binding"/>
    <property type="evidence" value="ECO:0007669"/>
    <property type="project" value="InterPro"/>
</dbReference>
<dbReference type="CDD" id="cd20736">
    <property type="entry name" value="PoNe_Nuclease"/>
    <property type="match status" value="1"/>
</dbReference>
<dbReference type="Gene3D" id="3.40.1350.10">
    <property type="match status" value="1"/>
</dbReference>
<dbReference type="HAMAP" id="MF_00048">
    <property type="entry name" value="UPF0102"/>
    <property type="match status" value="1"/>
</dbReference>
<dbReference type="InterPro" id="IPR011335">
    <property type="entry name" value="Restrct_endonuc-II-like"/>
</dbReference>
<dbReference type="InterPro" id="IPR011856">
    <property type="entry name" value="tRNA_endonuc-like_dom_sf"/>
</dbReference>
<dbReference type="InterPro" id="IPR003509">
    <property type="entry name" value="UPF0102_YraN-like"/>
</dbReference>
<dbReference type="NCBIfam" id="NF009150">
    <property type="entry name" value="PRK12497.1-3"/>
    <property type="match status" value="1"/>
</dbReference>
<dbReference type="PANTHER" id="PTHR34039">
    <property type="entry name" value="UPF0102 PROTEIN YRAN"/>
    <property type="match status" value="1"/>
</dbReference>
<dbReference type="PANTHER" id="PTHR34039:SF1">
    <property type="entry name" value="UPF0102 PROTEIN YRAN"/>
    <property type="match status" value="1"/>
</dbReference>
<dbReference type="Pfam" id="PF02021">
    <property type="entry name" value="UPF0102"/>
    <property type="match status" value="1"/>
</dbReference>
<dbReference type="SUPFAM" id="SSF52980">
    <property type="entry name" value="Restriction endonuclease-like"/>
    <property type="match status" value="1"/>
</dbReference>
<evidence type="ECO:0000255" key="1">
    <source>
        <dbReference type="HAMAP-Rule" id="MF_00048"/>
    </source>
</evidence>
<proteinExistence type="inferred from homology"/>
<sequence length="119" mass="13828">MAEHNELGKKGEELAVEYLRLKEYEILELNYRYQKAEVDIIAKRGNTLIAAEVKTRSTPEFGNPQDFVKPKQIQQLVKAVNHYVEEGELDVEVRFDIIAIIKNKAGTKIEHIQDAFFYF</sequence>
<reference key="1">
    <citation type="journal article" date="2006" name="Environ. Microbiol.">
        <title>Whole genome analysis of the marine Bacteroidetes'Gramella forsetii' reveals adaptations to degradation of polymeric organic matter.</title>
        <authorList>
            <person name="Bauer M."/>
            <person name="Kube M."/>
            <person name="Teeling H."/>
            <person name="Richter M."/>
            <person name="Lombardot T."/>
            <person name="Allers E."/>
            <person name="Wuerdemann C.A."/>
            <person name="Quast C."/>
            <person name="Kuhl H."/>
            <person name="Knaust F."/>
            <person name="Woebken D."/>
            <person name="Bischof K."/>
            <person name="Mussmann M."/>
            <person name="Choudhuri J.V."/>
            <person name="Meyer F."/>
            <person name="Reinhardt R."/>
            <person name="Amann R.I."/>
            <person name="Gloeckner F.O."/>
        </authorList>
    </citation>
    <scope>NUCLEOTIDE SEQUENCE [LARGE SCALE GENOMIC DNA]</scope>
    <source>
        <strain>DSM 17595 / CGMCC 1.15422 / KT0803</strain>
    </source>
</reference>
<name>Y3098_CHRFK</name>
<protein>
    <recommendedName>
        <fullName evidence="1">UPF0102 protein GFO_3098</fullName>
    </recommendedName>
</protein>
<accession>A0M5Z7</accession>
<comment type="similarity">
    <text evidence="1">Belongs to the UPF0102 family.</text>
</comment>
<feature type="chain" id="PRO_1000009222" description="UPF0102 protein GFO_3098">
    <location>
        <begin position="1"/>
        <end position="119"/>
    </location>
</feature>
<gene>
    <name type="ordered locus">GFO_3098</name>
</gene>